<accession>Q89W41</accession>
<gene>
    <name evidence="1" type="primary">uppS1</name>
    <name type="ordered locus">blr0852</name>
</gene>
<dbReference type="EC" id="2.5.1.-" evidence="1"/>
<dbReference type="EMBL" id="BA000040">
    <property type="protein sequence ID" value="BAC46117.1"/>
    <property type="molecule type" value="Genomic_DNA"/>
</dbReference>
<dbReference type="RefSeq" id="NP_767492.1">
    <property type="nucleotide sequence ID" value="NC_004463.1"/>
</dbReference>
<dbReference type="RefSeq" id="WP_011083674.1">
    <property type="nucleotide sequence ID" value="NC_004463.1"/>
</dbReference>
<dbReference type="SMR" id="Q89W41"/>
<dbReference type="STRING" id="224911.AAV28_01100"/>
<dbReference type="EnsemblBacteria" id="BAC46117">
    <property type="protein sequence ID" value="BAC46117"/>
    <property type="gene ID" value="BAC46117"/>
</dbReference>
<dbReference type="GeneID" id="46488125"/>
<dbReference type="KEGG" id="bja:blr0852"/>
<dbReference type="PATRIC" id="fig|224911.44.peg.234"/>
<dbReference type="eggNOG" id="COG0020">
    <property type="taxonomic scope" value="Bacteria"/>
</dbReference>
<dbReference type="HOGENOM" id="CLU_038505_1_1_5"/>
<dbReference type="InParanoid" id="Q89W41"/>
<dbReference type="OrthoDB" id="4191603at2"/>
<dbReference type="PhylomeDB" id="Q89W41"/>
<dbReference type="Proteomes" id="UP000002526">
    <property type="component" value="Chromosome"/>
</dbReference>
<dbReference type="GO" id="GO:0005829">
    <property type="term" value="C:cytosol"/>
    <property type="evidence" value="ECO:0000318"/>
    <property type="project" value="GO_Central"/>
</dbReference>
<dbReference type="GO" id="GO:0008834">
    <property type="term" value="F:ditrans,polycis-undecaprenyl-diphosphate synthase [(2E,6E)-farnesyl-diphosphate specific] activity"/>
    <property type="evidence" value="ECO:0000318"/>
    <property type="project" value="GO_Central"/>
</dbReference>
<dbReference type="GO" id="GO:0000287">
    <property type="term" value="F:magnesium ion binding"/>
    <property type="evidence" value="ECO:0000318"/>
    <property type="project" value="GO_Central"/>
</dbReference>
<dbReference type="GO" id="GO:0016094">
    <property type="term" value="P:polyprenol biosynthetic process"/>
    <property type="evidence" value="ECO:0000318"/>
    <property type="project" value="GO_Central"/>
</dbReference>
<dbReference type="CDD" id="cd00475">
    <property type="entry name" value="Cis_IPPS"/>
    <property type="match status" value="1"/>
</dbReference>
<dbReference type="FunFam" id="3.40.1180.10:FF:000027">
    <property type="entry name" value="Isoprenyl transferase"/>
    <property type="match status" value="1"/>
</dbReference>
<dbReference type="Gene3D" id="3.40.1180.10">
    <property type="entry name" value="Decaprenyl diphosphate synthase-like"/>
    <property type="match status" value="1"/>
</dbReference>
<dbReference type="HAMAP" id="MF_01139">
    <property type="entry name" value="ISPT"/>
    <property type="match status" value="1"/>
</dbReference>
<dbReference type="InterPro" id="IPR001441">
    <property type="entry name" value="UPP_synth-like"/>
</dbReference>
<dbReference type="InterPro" id="IPR018520">
    <property type="entry name" value="UPP_synth-like_CS"/>
</dbReference>
<dbReference type="InterPro" id="IPR036424">
    <property type="entry name" value="UPP_synth-like_sf"/>
</dbReference>
<dbReference type="NCBIfam" id="NF011412">
    <property type="entry name" value="PRK14839.1"/>
    <property type="match status" value="1"/>
</dbReference>
<dbReference type="NCBIfam" id="TIGR00055">
    <property type="entry name" value="uppS"/>
    <property type="match status" value="1"/>
</dbReference>
<dbReference type="PANTHER" id="PTHR10291:SF0">
    <property type="entry name" value="DEHYDRODOLICHYL DIPHOSPHATE SYNTHASE 2"/>
    <property type="match status" value="1"/>
</dbReference>
<dbReference type="PANTHER" id="PTHR10291">
    <property type="entry name" value="DEHYDRODOLICHYL DIPHOSPHATE SYNTHASE FAMILY MEMBER"/>
    <property type="match status" value="1"/>
</dbReference>
<dbReference type="Pfam" id="PF01255">
    <property type="entry name" value="Prenyltransf"/>
    <property type="match status" value="1"/>
</dbReference>
<dbReference type="SUPFAM" id="SSF64005">
    <property type="entry name" value="Undecaprenyl diphosphate synthase"/>
    <property type="match status" value="1"/>
</dbReference>
<dbReference type="PROSITE" id="PS01066">
    <property type="entry name" value="UPP_SYNTHASE"/>
    <property type="match status" value="1"/>
</dbReference>
<keyword id="KW-0460">Magnesium</keyword>
<keyword id="KW-0479">Metal-binding</keyword>
<keyword id="KW-1185">Reference proteome</keyword>
<keyword id="KW-0808">Transferase</keyword>
<organism>
    <name type="scientific">Bradyrhizobium diazoefficiens (strain JCM 10833 / BCRC 13528 / IAM 13628 / NBRC 14792 / USDA 110)</name>
    <dbReference type="NCBI Taxonomy" id="224911"/>
    <lineage>
        <taxon>Bacteria</taxon>
        <taxon>Pseudomonadati</taxon>
        <taxon>Pseudomonadota</taxon>
        <taxon>Alphaproteobacteria</taxon>
        <taxon>Hyphomicrobiales</taxon>
        <taxon>Nitrobacteraceae</taxon>
        <taxon>Bradyrhizobium</taxon>
    </lineage>
</organism>
<comment type="function">
    <text evidence="1">Catalyzes the condensation of isopentenyl diphosphate (IPP) with allylic pyrophosphates generating different type of terpenoids.</text>
</comment>
<comment type="cofactor">
    <cofactor evidence="1">
        <name>Mg(2+)</name>
        <dbReference type="ChEBI" id="CHEBI:18420"/>
    </cofactor>
    <text evidence="1">Binds 2 magnesium ions per subunit.</text>
</comment>
<comment type="subunit">
    <text evidence="1">Homodimer.</text>
</comment>
<comment type="similarity">
    <text evidence="1">Belongs to the UPP synthase family.</text>
</comment>
<name>ISPT1_BRADU</name>
<reference key="1">
    <citation type="journal article" date="2002" name="DNA Res.">
        <title>Complete genomic sequence of nitrogen-fixing symbiotic bacterium Bradyrhizobium japonicum USDA110.</title>
        <authorList>
            <person name="Kaneko T."/>
            <person name="Nakamura Y."/>
            <person name="Sato S."/>
            <person name="Minamisawa K."/>
            <person name="Uchiumi T."/>
            <person name="Sasamoto S."/>
            <person name="Watanabe A."/>
            <person name="Idesawa K."/>
            <person name="Iriguchi M."/>
            <person name="Kawashima K."/>
            <person name="Kohara M."/>
            <person name="Matsumoto M."/>
            <person name="Shimpo S."/>
            <person name="Tsuruoka H."/>
            <person name="Wada T."/>
            <person name="Yamada M."/>
            <person name="Tabata S."/>
        </authorList>
    </citation>
    <scope>NUCLEOTIDE SEQUENCE [LARGE SCALE GENOMIC DNA]</scope>
    <source>
        <strain>JCM 10833 / BCRC 13528 / IAM 13628 / NBRC 14792 / USDA 110</strain>
    </source>
</reference>
<sequence length="246" mass="27095">MQSDMTSRSEKLHVGIIMDGNGRWATRRGLSRLRGHEAGVETIRRIVEAAPKQGIGTLTLYAFSTDNWRRPKAEVAALMTLLRFYLANEVQSLVKNGVRLTVIGRRDRLPDGIANAIARAEAATAHGSTLHLRIAVDYSARDAILNAAAKAAALTSLTREAFSQLVTGEAGLRDVDLIIRTSGEKRLSDFLLWEGAYAELHFTERMWPEFDAGDLAEALAAFHGRERRFGGLQAIMPEEVPSLSRV</sequence>
<proteinExistence type="inferred from homology"/>
<feature type="chain" id="PRO_0000123579" description="Isoprenyl transferase 1">
    <location>
        <begin position="1"/>
        <end position="246"/>
    </location>
</feature>
<feature type="active site" evidence="1">
    <location>
        <position position="19"/>
    </location>
</feature>
<feature type="active site" description="Proton acceptor" evidence="1">
    <location>
        <position position="67"/>
    </location>
</feature>
<feature type="binding site" evidence="1">
    <location>
        <position position="19"/>
    </location>
    <ligand>
        <name>Mg(2+)</name>
        <dbReference type="ChEBI" id="CHEBI:18420"/>
    </ligand>
</feature>
<feature type="binding site" evidence="1">
    <location>
        <begin position="20"/>
        <end position="23"/>
    </location>
    <ligand>
        <name>substrate</name>
    </ligand>
</feature>
<feature type="binding site" evidence="1">
    <location>
        <position position="24"/>
    </location>
    <ligand>
        <name>substrate</name>
    </ligand>
</feature>
<feature type="binding site" evidence="1">
    <location>
        <position position="32"/>
    </location>
    <ligand>
        <name>substrate</name>
    </ligand>
</feature>
<feature type="binding site" evidence="1">
    <location>
        <position position="36"/>
    </location>
    <ligand>
        <name>substrate</name>
    </ligand>
</feature>
<feature type="binding site" evidence="1">
    <location>
        <begin position="64"/>
        <end position="66"/>
    </location>
    <ligand>
        <name>substrate</name>
    </ligand>
</feature>
<feature type="binding site" evidence="1">
    <location>
        <position position="68"/>
    </location>
    <ligand>
        <name>substrate</name>
    </ligand>
</feature>
<feature type="binding site" evidence="1">
    <location>
        <position position="70"/>
    </location>
    <ligand>
        <name>substrate</name>
    </ligand>
</feature>
<feature type="binding site" evidence="1">
    <location>
        <position position="180"/>
    </location>
    <ligand>
        <name>substrate</name>
    </ligand>
</feature>
<feature type="binding site" evidence="1">
    <location>
        <begin position="186"/>
        <end position="188"/>
    </location>
    <ligand>
        <name>substrate</name>
    </ligand>
</feature>
<feature type="binding site" evidence="1">
    <location>
        <position position="199"/>
    </location>
    <ligand>
        <name>Mg(2+)</name>
        <dbReference type="ChEBI" id="CHEBI:18420"/>
    </ligand>
</feature>
<protein>
    <recommendedName>
        <fullName evidence="1">Isoprenyl transferase 1</fullName>
        <ecNumber evidence="1">2.5.1.-</ecNumber>
    </recommendedName>
</protein>
<evidence type="ECO:0000255" key="1">
    <source>
        <dbReference type="HAMAP-Rule" id="MF_01139"/>
    </source>
</evidence>